<evidence type="ECO:0000250" key="1">
    <source>
        <dbReference type="UniProtKB" id="P32529"/>
    </source>
</evidence>
<evidence type="ECO:0000255" key="2"/>
<evidence type="ECO:0000255" key="3">
    <source>
        <dbReference type="PROSITE-ProRule" id="PRU00472"/>
    </source>
</evidence>
<evidence type="ECO:0000255" key="4">
    <source>
        <dbReference type="PROSITE-ProRule" id="PRU10145"/>
    </source>
</evidence>
<evidence type="ECO:0000269" key="5">
    <source>
    </source>
</evidence>
<evidence type="ECO:0000269" key="6">
    <source>
    </source>
</evidence>
<evidence type="ECO:0000269" key="7">
    <source>
    </source>
</evidence>
<evidence type="ECO:0000269" key="8">
    <source>
    </source>
</evidence>
<evidence type="ECO:0000269" key="9">
    <source>
    </source>
</evidence>
<evidence type="ECO:0000269" key="10">
    <source>
    </source>
</evidence>
<evidence type="ECO:0000269" key="11">
    <source>
    </source>
</evidence>
<evidence type="ECO:0000269" key="12">
    <source>
    </source>
</evidence>
<evidence type="ECO:0000269" key="13">
    <source>
    </source>
</evidence>
<evidence type="ECO:0000269" key="14">
    <source>
    </source>
</evidence>
<evidence type="ECO:0000269" key="15">
    <source>
    </source>
</evidence>
<evidence type="ECO:0000269" key="16">
    <source>
    </source>
</evidence>
<evidence type="ECO:0000269" key="17">
    <source>
    </source>
</evidence>
<evidence type="ECO:0000269" key="18">
    <source>
    </source>
</evidence>
<evidence type="ECO:0000305" key="19"/>
<evidence type="ECO:0000305" key="20">
    <source>
    </source>
</evidence>
<evidence type="ECO:0007744" key="21">
    <source>
    </source>
</evidence>
<evidence type="ECO:0007829" key="22">
    <source>
        <dbReference type="PDB" id="1I50"/>
    </source>
</evidence>
<evidence type="ECO:0007829" key="23">
    <source>
        <dbReference type="PDB" id="1TWF"/>
    </source>
</evidence>
<evidence type="ECO:0007829" key="24">
    <source>
        <dbReference type="PDB" id="2NVQ"/>
    </source>
</evidence>
<evidence type="ECO:0007829" key="25">
    <source>
        <dbReference type="PDB" id="3S1N"/>
    </source>
</evidence>
<evidence type="ECO:0007829" key="26">
    <source>
        <dbReference type="PDB" id="7NKX"/>
    </source>
</evidence>
<evidence type="ECO:0007829" key="27">
    <source>
        <dbReference type="PDB" id="8JCH"/>
    </source>
</evidence>
<evidence type="ECO:0007829" key="28">
    <source>
        <dbReference type="PDB" id="8TVY"/>
    </source>
</evidence>
<comment type="function">
    <text evidence="8">DNA-dependent RNA polymerase catalyzes the transcription of DNA into RNA using the four ribonucleoside triphosphates as substrates. Component of RNA polymerase II which synthesizes mRNA precursors and many functional non-coding RNAs. Pol II is the central component of the basal RNA polymerase II transcription machinery. It is composed of mobile elements that move relative to each other. RPB9 is part of the upper jaw surrounding the central large cleft and thought to grab the incoming DNA template. Involved in the regulation of transcription elongation. Involved in DNA repair of damage in the transcribed strand. Mediates a transcription-coupled repair (TCR) subpathway of nucleotide excision repair (NER).</text>
</comment>
<comment type="subunit">
    <text evidence="5 6 7 9 10 11 13 14 15 16 17 18">Component of the RNA polymerase II (Pol II) complex consisting of 12 subunits.</text>
</comment>
<comment type="interaction">
    <interactant intactId="EBI-15798">
        <id>P27999</id>
    </interactant>
    <interactant intactId="EBI-15794">
        <id>P20436</id>
        <label>RPB8</label>
    </interactant>
    <organismsDiffer>false</organismsDiffer>
    <experiments>4</experiments>
</comment>
<comment type="subcellular location">
    <subcellularLocation>
        <location evidence="1">Nucleus</location>
        <location evidence="1">Nucleolus</location>
    </subcellularLocation>
</comment>
<comment type="miscellaneous">
    <text evidence="12">Present with 2440 molecules/cell in log phase SD medium.</text>
</comment>
<comment type="similarity">
    <text evidence="19">Belongs to the archaeal RpoM/eukaryotic RPA12/RPB9/RPC11 RNA polymerase family.</text>
</comment>
<proteinExistence type="evidence at protein level"/>
<organism>
    <name type="scientific">Saccharomyces cerevisiae (strain ATCC 204508 / S288c)</name>
    <name type="common">Baker's yeast</name>
    <dbReference type="NCBI Taxonomy" id="559292"/>
    <lineage>
        <taxon>Eukaryota</taxon>
        <taxon>Fungi</taxon>
        <taxon>Dikarya</taxon>
        <taxon>Ascomycota</taxon>
        <taxon>Saccharomycotina</taxon>
        <taxon>Saccharomycetes</taxon>
        <taxon>Saccharomycetales</taxon>
        <taxon>Saccharomycetaceae</taxon>
        <taxon>Saccharomyces</taxon>
    </lineage>
</organism>
<gene>
    <name type="primary">RPB9</name>
    <name type="ordered locus">YGL070C</name>
</gene>
<protein>
    <recommendedName>
        <fullName>DNA-directed RNA polymerase II subunit RPB9</fullName>
        <shortName>RNA polymerase II subunit B9</shortName>
    </recommendedName>
    <alternativeName>
        <fullName>B12.6</fullName>
    </alternativeName>
    <alternativeName>
        <fullName>DNA-directed RNA polymerase II 14.2 kDa polypeptide</fullName>
    </alternativeName>
    <alternativeName>
        <fullName>DNA-directed RNA polymerase II subunit 9</fullName>
    </alternativeName>
</protein>
<reference key="1">
    <citation type="journal article" date="1991" name="J. Biol. Chem.">
        <title>Yeast RNA polymerase II subunit RPB9 is essential for growth at temperature extremes.</title>
        <authorList>
            <person name="Woychik N.A."/>
            <person name="Lane W.S."/>
            <person name="Young R.A."/>
        </authorList>
    </citation>
    <scope>NUCLEOTIDE SEQUENCE [GENOMIC DNA]</scope>
    <scope>PROTEIN SEQUENCE OF 46-62</scope>
</reference>
<reference key="2">
    <citation type="journal article" date="1997" name="Yeast">
        <title>Sequence analysis of 203 kilobases from Saccharomyces cerevisiae chromosome VII.</title>
        <authorList>
            <person name="Rieger M."/>
            <person name="Brueckner M."/>
            <person name="Schaefer M."/>
            <person name="Mueller-Auer S."/>
        </authorList>
    </citation>
    <scope>NUCLEOTIDE SEQUENCE [GENOMIC DNA]</scope>
    <source>
        <strain>ATCC 204508 / S288c</strain>
    </source>
</reference>
<reference key="3">
    <citation type="journal article" date="1997" name="Nature">
        <title>The nucleotide sequence of Saccharomyces cerevisiae chromosome VII.</title>
        <authorList>
            <person name="Tettelin H."/>
            <person name="Agostoni-Carbone M.L."/>
            <person name="Albermann K."/>
            <person name="Albers M."/>
            <person name="Arroyo J."/>
            <person name="Backes U."/>
            <person name="Barreiros T."/>
            <person name="Bertani I."/>
            <person name="Bjourson A.J."/>
            <person name="Brueckner M."/>
            <person name="Bruschi C.V."/>
            <person name="Carignani G."/>
            <person name="Castagnoli L."/>
            <person name="Cerdan E."/>
            <person name="Clemente M.L."/>
            <person name="Coblenz A."/>
            <person name="Coglievina M."/>
            <person name="Coissac E."/>
            <person name="Defoor E."/>
            <person name="Del Bino S."/>
            <person name="Delius H."/>
            <person name="Delneri D."/>
            <person name="de Wergifosse P."/>
            <person name="Dujon B."/>
            <person name="Durand P."/>
            <person name="Entian K.-D."/>
            <person name="Eraso P."/>
            <person name="Escribano V."/>
            <person name="Fabiani L."/>
            <person name="Fartmann B."/>
            <person name="Feroli F."/>
            <person name="Feuermann M."/>
            <person name="Frontali L."/>
            <person name="Garcia-Gonzalez M."/>
            <person name="Garcia-Saez M.I."/>
            <person name="Goffeau A."/>
            <person name="Guerreiro P."/>
            <person name="Hani J."/>
            <person name="Hansen M."/>
            <person name="Hebling U."/>
            <person name="Hernandez K."/>
            <person name="Heumann K."/>
            <person name="Hilger F."/>
            <person name="Hofmann B."/>
            <person name="Indge K.J."/>
            <person name="James C.M."/>
            <person name="Klima R."/>
            <person name="Koetter P."/>
            <person name="Kramer B."/>
            <person name="Kramer W."/>
            <person name="Lauquin G."/>
            <person name="Leuther H."/>
            <person name="Louis E.J."/>
            <person name="Maillier E."/>
            <person name="Marconi A."/>
            <person name="Martegani E."/>
            <person name="Mazon M.J."/>
            <person name="Mazzoni C."/>
            <person name="McReynolds A.D.K."/>
            <person name="Melchioretto P."/>
            <person name="Mewes H.-W."/>
            <person name="Minenkova O."/>
            <person name="Mueller-Auer S."/>
            <person name="Nawrocki A."/>
            <person name="Netter P."/>
            <person name="Neu R."/>
            <person name="Nombela C."/>
            <person name="Oliver S.G."/>
            <person name="Panzeri L."/>
            <person name="Paoluzi S."/>
            <person name="Plevani P."/>
            <person name="Portetelle D."/>
            <person name="Portillo F."/>
            <person name="Potier S."/>
            <person name="Purnelle B."/>
            <person name="Rieger M."/>
            <person name="Riles L."/>
            <person name="Rinaldi T."/>
            <person name="Robben J."/>
            <person name="Rodrigues-Pousada C."/>
            <person name="Rodriguez-Belmonte E."/>
            <person name="Rodriguez-Torres A.M."/>
            <person name="Rose M."/>
            <person name="Ruzzi M."/>
            <person name="Saliola M."/>
            <person name="Sanchez-Perez M."/>
            <person name="Schaefer B."/>
            <person name="Schaefer M."/>
            <person name="Scharfe M."/>
            <person name="Schmidheini T."/>
            <person name="Schreer A."/>
            <person name="Skala J."/>
            <person name="Souciet J.-L."/>
            <person name="Steensma H.Y."/>
            <person name="Talla E."/>
            <person name="Thierry A."/>
            <person name="Vandenbol M."/>
            <person name="van der Aart Q.J.M."/>
            <person name="Van Dyck L."/>
            <person name="Vanoni M."/>
            <person name="Verhasselt P."/>
            <person name="Voet M."/>
            <person name="Volckaert G."/>
            <person name="Wambutt R."/>
            <person name="Watson M.D."/>
            <person name="Weber N."/>
            <person name="Wedler E."/>
            <person name="Wedler H."/>
            <person name="Wipfli P."/>
            <person name="Wolf K."/>
            <person name="Wright L.F."/>
            <person name="Zaccaria P."/>
            <person name="Zimmermann M."/>
            <person name="Zollner A."/>
            <person name="Kleine K."/>
        </authorList>
    </citation>
    <scope>NUCLEOTIDE SEQUENCE [LARGE SCALE GENOMIC DNA]</scope>
    <source>
        <strain>ATCC 204508 / S288c</strain>
    </source>
</reference>
<reference key="4">
    <citation type="journal article" date="2014" name="G3 (Bethesda)">
        <title>The reference genome sequence of Saccharomyces cerevisiae: Then and now.</title>
        <authorList>
            <person name="Engel S.R."/>
            <person name="Dietrich F.S."/>
            <person name="Fisk D.G."/>
            <person name="Binkley G."/>
            <person name="Balakrishnan R."/>
            <person name="Costanzo M.C."/>
            <person name="Dwight S.S."/>
            <person name="Hitz B.C."/>
            <person name="Karra K."/>
            <person name="Nash R.S."/>
            <person name="Weng S."/>
            <person name="Wong E.D."/>
            <person name="Lloyd P."/>
            <person name="Skrzypek M.S."/>
            <person name="Miyasato S.R."/>
            <person name="Simison M."/>
            <person name="Cherry J.M."/>
        </authorList>
    </citation>
    <scope>GENOME REANNOTATION</scope>
    <source>
        <strain>ATCC 204508 / S288c</strain>
    </source>
</reference>
<reference key="5">
    <citation type="journal article" date="2007" name="Genome Res.">
        <title>Approaching a complete repository of sequence-verified protein-encoding clones for Saccharomyces cerevisiae.</title>
        <authorList>
            <person name="Hu Y."/>
            <person name="Rolfs A."/>
            <person name="Bhullar B."/>
            <person name="Murthy T.V.S."/>
            <person name="Zhu C."/>
            <person name="Berger M.F."/>
            <person name="Camargo A.A."/>
            <person name="Kelley F."/>
            <person name="McCarron S."/>
            <person name="Jepson D."/>
            <person name="Richardson A."/>
            <person name="Raphael J."/>
            <person name="Moreira D."/>
            <person name="Taycher E."/>
            <person name="Zuo D."/>
            <person name="Mohr S."/>
            <person name="Kane M.F."/>
            <person name="Williamson J."/>
            <person name="Simpson A.J.G."/>
            <person name="Bulyk M.L."/>
            <person name="Harlow E."/>
            <person name="Marsischky G."/>
            <person name="Kolodner R.D."/>
            <person name="LaBaer J."/>
        </authorList>
    </citation>
    <scope>NUCLEOTIDE SEQUENCE [GENOMIC DNA]</scope>
    <source>
        <strain>ATCC 204508 / S288c</strain>
    </source>
</reference>
<reference key="6">
    <citation type="journal article" date="2000" name="J. Biol. Chem.">
        <title>RNA polymerase II subunit Rpb9 regulates transcription elongation in vivo.</title>
        <authorList>
            <person name="Hemming S.A."/>
            <person name="Jansma D.B."/>
            <person name="Macgregor P.F."/>
            <person name="Goryachev A."/>
            <person name="Friesen J.D."/>
            <person name="Edwards A.M."/>
        </authorList>
    </citation>
    <scope>INVOLVEMENT IN TRANSCRIPTION ELONGATION</scope>
</reference>
<reference key="7">
    <citation type="journal article" date="2002" name="EMBO J.">
        <title>Rpb4 and Rpb9 mediate subpathways of transcription-coupled DNA repair in Saccharomyces cerevisiae.</title>
        <authorList>
            <person name="Li S."/>
            <person name="Smerdon M.J."/>
        </authorList>
    </citation>
    <scope>FUNCTION IN DNA REPAIR</scope>
</reference>
<reference key="8">
    <citation type="journal article" date="2003" name="Nature">
        <title>Global analysis of protein expression in yeast.</title>
        <authorList>
            <person name="Ghaemmaghami S."/>
            <person name="Huh W.-K."/>
            <person name="Bower K."/>
            <person name="Howson R.W."/>
            <person name="Belle A."/>
            <person name="Dephoure N."/>
            <person name="O'Shea E.K."/>
            <person name="Weissman J.S."/>
        </authorList>
    </citation>
    <scope>LEVEL OF PROTEIN EXPRESSION [LARGE SCALE ANALYSIS]</scope>
</reference>
<reference key="9">
    <citation type="journal article" date="2008" name="Mol. Cell. Proteomics">
        <title>A multidimensional chromatography technology for in-depth phosphoproteome analysis.</title>
        <authorList>
            <person name="Albuquerque C.P."/>
            <person name="Smolka M.B."/>
            <person name="Payne S.H."/>
            <person name="Bafna V."/>
            <person name="Eng J."/>
            <person name="Zhou H."/>
        </authorList>
    </citation>
    <scope>PHOSPHORYLATION [LARGE SCALE ANALYSIS] AT SER-40</scope>
    <scope>IDENTIFICATION BY MASS SPECTROMETRY [LARGE SCALE ANALYSIS]</scope>
</reference>
<reference key="10">
    <citation type="journal article" date="2003" name="Mol. Cell">
        <title>RNA polymerase II/TFIIF structure and conserved organization of the initiation complex.</title>
        <authorList>
            <person name="Chung W.H."/>
            <person name="Craighead J.L."/>
            <person name="Chang W.H."/>
            <person name="Ezeokonkwo C."/>
            <person name="Bareket-Samish A."/>
            <person name="Kornberg R.D."/>
            <person name="Asturias F.J."/>
        </authorList>
    </citation>
    <scope>ELECTRON MICROSCOPY OF THE RNA POL II/TFIIF COMPLEX</scope>
</reference>
<reference key="11">
    <citation type="journal article" date="2001" name="Science">
        <title>Structural basis of transcription: RNA polymerase II at 2.8 A resolution.</title>
        <authorList>
            <person name="Cramer P."/>
            <person name="Bushnell D.A."/>
            <person name="Kornberg R.D."/>
        </authorList>
    </citation>
    <scope>X-RAY CRYSTALLOGRAPHY (2.8 ANGSTROMS) OF THE RNA POL II CORE COMPLEX IN COMPLEX WITH ZINC IONS</scope>
    <scope>SUBUNIT</scope>
</reference>
<reference key="12">
    <citation type="journal article" date="2001" name="Science">
        <title>Structural basis of transcription: an RNA polymerase II elongation complex at 3.3 A resolution.</title>
        <authorList>
            <person name="Gnatt A.L."/>
            <person name="Cramer P."/>
            <person name="Fu J."/>
            <person name="Bushnell D.A."/>
            <person name="Kornberg R.D."/>
        </authorList>
    </citation>
    <scope>X-RAY CRYSTALLOGRAPHY (3.3 ANGSTROMS) OF THE RNA POL II CORE COMPLEX IN COMPLEX WITH ZINC IONS</scope>
    <scope>SUBUNIT</scope>
</reference>
<reference key="13">
    <citation type="journal article" date="2002" name="Proc. Natl. Acad. Sci. U.S.A.">
        <title>Structural basis of transcription: alpha-amanitin-RNA polymerase II cocrystal at 2.8 A resolution.</title>
        <authorList>
            <person name="Bushnell D.A."/>
            <person name="Cramer P."/>
            <person name="Kornberg R.D."/>
        </authorList>
    </citation>
    <scope>X-RAY CRYSTALLOGRAPHY (2.8 ANGSTROMS) OF THE RNA POL II CORE COMPLEX IN COMPLEX WITH ALPHA-AMANITIN AND ZINC IONS</scope>
    <scope>SUBUNIT</scope>
</reference>
<reference key="14">
    <citation type="journal article" date="2003" name="Cell">
        <title>Architecture of the RNA polymerase II-TFIIS complex and implications for mRNA cleavage.</title>
        <authorList>
            <person name="Kettenberger H."/>
            <person name="Armache K.J."/>
            <person name="Cramer P."/>
        </authorList>
    </citation>
    <scope>X-RAY CRYSTALLOGRAPHY (3.8 ANGSTROMS) OF THE RNA POL II COMPLEX IN COMPLEX WITH DST1</scope>
    <scope>SUBUNIT</scope>
</reference>
<reference key="15">
    <citation type="journal article" date="2003" name="Proc. Natl. Acad. Sci. U.S.A.">
        <title>Architecture of initiation-competent 12-subunit RNA polymerase II.</title>
        <authorList>
            <person name="Armache K.J."/>
            <person name="Kettenberger H."/>
            <person name="Cramer P."/>
        </authorList>
    </citation>
    <scope>X-RAY CRYSTALLOGRAPHY (4.2 ANGSTROMS) OF THE RNA POL II COMPLEX</scope>
    <scope>SUBUNIT</scope>
</reference>
<reference key="16">
    <citation type="journal article" date="2003" name="Proc. Natl. Acad. Sci. U.S.A.">
        <title>Complete, 12-subunit RNA polymerase II at 4.1-A resolution: implications for the initiation of transcription.</title>
        <authorList>
            <person name="Bushnell D.A."/>
            <person name="Kornberg R.D."/>
        </authorList>
    </citation>
    <scope>X-RAY CRYSTALLOGRAPHY (4.1 ANGSTROMS) OF THE RNA POL II CORE COMPLEX</scope>
    <scope>SUBUNIT</scope>
</reference>
<reference key="17">
    <citation type="journal article" date="2004" name="Cell">
        <title>Structural basis of transcription: nucleotide selection by rotation in the RNA polymerase II active center.</title>
        <authorList>
            <person name="Westover K.D."/>
            <person name="Bushnell D.A."/>
            <person name="Kornberg R.D."/>
        </authorList>
    </citation>
    <scope>X-RAY CRYSTALLOGRAPHY (2.3 ANGSTROMS) OF THE RNA POL II CORE COMPLEX IN COMPLEX WITH ZINC IONS</scope>
    <scope>SUBUNIT</scope>
</reference>
<reference key="18">
    <citation type="journal article" date="2004" name="Mol. Cell">
        <title>Complete RNA polymerase II elongation complex structure and its interactions with NTP and TFIIS.</title>
        <authorList>
            <person name="Kettenberger H."/>
            <person name="Armache K.J."/>
            <person name="Cramer P."/>
        </authorList>
    </citation>
    <scope>X-RAY CRYSTALLOGRAPHY (4.5 ANGSTROMS)</scope>
    <scope>SUBUNIT</scope>
</reference>
<reference key="19">
    <citation type="journal article" date="2004" name="Science">
        <title>Structural basis of transcription: an RNA polymerase II-TFIIB cocrystal at 4.5 Angstroms.</title>
        <authorList>
            <person name="Bushnell D.A."/>
            <person name="Westover K.D."/>
            <person name="Davis R.E."/>
            <person name="Kornberg R.D."/>
        </authorList>
    </citation>
    <scope>X-RAY CRYSTALLOGRAPHY (4.5 ANGSTROMS) OF THE RNA POL II CORE COMPLEX</scope>
    <scope>SUBUNIT</scope>
</reference>
<reference key="20">
    <citation type="journal article" date="2005" name="J. Biol. Chem.">
        <title>Structures of complete RNA polymerase II and its subcomplex, Rpb4/7.</title>
        <authorList>
            <person name="Armache K.J."/>
            <person name="Mitterweger S."/>
            <person name="Meinhart A."/>
            <person name="Cramer P."/>
        </authorList>
    </citation>
    <scope>X-RAY CRYSTALLOGRAPHY (3.8 ANGSTROMS) OF THE RNA POL II COMPLEX</scope>
    <scope>SUBUNIT</scope>
</reference>
<reference key="21">
    <citation type="journal article" date="2006" name="Nat. Struct. Mol. Biol.">
        <title>Structure of an RNA polymerase II-RNA inhibitor complex elucidates transcription regulation by noncoding RNAs.</title>
        <authorList>
            <person name="Kettenberger H."/>
            <person name="Eisenfuhr A."/>
            <person name="Brueckner F."/>
            <person name="Theis M."/>
            <person name="Famulok M."/>
            <person name="Cramer P."/>
        </authorList>
    </citation>
    <scope>X-RAY CRYSTALLOGRAPHY (3.8 ANGSTROMS) OF THE RNA POL II COMPLEX IN COMPLEX WITH INHIBITING NON-CODING RNA</scope>
    <scope>SUBUNIT</scope>
</reference>
<reference key="22">
    <citation type="journal article" date="2006" name="Structure">
        <title>Phasing RNA polymerase II using intrinsically bound Zn atoms: an updated structural model.</title>
        <authorList>
            <person name="Meyer P.A."/>
            <person name="Ye P."/>
            <person name="Zhang M."/>
            <person name="Suh M.H."/>
            <person name="Fu J."/>
        </authorList>
    </citation>
    <scope>X-RAY CRYSTALLOGRAPHY (4.15 ANGSTROMS) OF THE RNA POL II COMPLEX</scope>
    <scope>SUBUNIT</scope>
</reference>
<accession>P27999</accession>
<accession>D6VU72</accession>
<dbReference type="EMBL" id="M73060">
    <property type="protein sequence ID" value="AAA34997.1"/>
    <property type="molecule type" value="Genomic_DNA"/>
</dbReference>
<dbReference type="EMBL" id="Z72592">
    <property type="protein sequence ID" value="CAA96774.1"/>
    <property type="molecule type" value="Genomic_DNA"/>
</dbReference>
<dbReference type="EMBL" id="AY557799">
    <property type="protein sequence ID" value="AAS56125.1"/>
    <property type="molecule type" value="Genomic_DNA"/>
</dbReference>
<dbReference type="EMBL" id="BK006941">
    <property type="protein sequence ID" value="DAA08033.1"/>
    <property type="molecule type" value="Genomic_DNA"/>
</dbReference>
<dbReference type="PIR" id="A41016">
    <property type="entry name" value="RNBY29"/>
</dbReference>
<dbReference type="RefSeq" id="NP_011445.1">
    <property type="nucleotide sequence ID" value="NM_001180935.1"/>
</dbReference>
<dbReference type="PDB" id="1I3Q">
    <property type="method" value="X-ray"/>
    <property type="resolution" value="3.10 A"/>
    <property type="chains" value="I=1-122"/>
</dbReference>
<dbReference type="PDB" id="1I50">
    <property type="method" value="X-ray"/>
    <property type="resolution" value="2.80 A"/>
    <property type="chains" value="I=1-122"/>
</dbReference>
<dbReference type="PDB" id="1I6H">
    <property type="method" value="X-ray"/>
    <property type="resolution" value="3.30 A"/>
    <property type="chains" value="I=1-122"/>
</dbReference>
<dbReference type="PDB" id="1K83">
    <property type="method" value="X-ray"/>
    <property type="resolution" value="2.80 A"/>
    <property type="chains" value="I=1-122"/>
</dbReference>
<dbReference type="PDB" id="1NIK">
    <property type="method" value="X-ray"/>
    <property type="resolution" value="4.10 A"/>
    <property type="chains" value="I=1-122"/>
</dbReference>
<dbReference type="PDB" id="1NT9">
    <property type="method" value="X-ray"/>
    <property type="resolution" value="4.20 A"/>
    <property type="chains" value="I=1-122"/>
</dbReference>
<dbReference type="PDB" id="1PQV">
    <property type="method" value="X-ray"/>
    <property type="resolution" value="3.80 A"/>
    <property type="chains" value="I=1-122"/>
</dbReference>
<dbReference type="PDB" id="1R5U">
    <property type="method" value="X-ray"/>
    <property type="resolution" value="4.50 A"/>
    <property type="chains" value="I=1-122"/>
</dbReference>
<dbReference type="PDB" id="1R9S">
    <property type="method" value="X-ray"/>
    <property type="resolution" value="4.25 A"/>
    <property type="chains" value="I=1-122"/>
</dbReference>
<dbReference type="PDB" id="1R9T">
    <property type="method" value="X-ray"/>
    <property type="resolution" value="3.50 A"/>
    <property type="chains" value="I=1-122"/>
</dbReference>
<dbReference type="PDB" id="1SFO">
    <property type="method" value="X-ray"/>
    <property type="resolution" value="3.61 A"/>
    <property type="chains" value="I=1-122"/>
</dbReference>
<dbReference type="PDB" id="1TWA">
    <property type="method" value="X-ray"/>
    <property type="resolution" value="3.20 A"/>
    <property type="chains" value="I=1-122"/>
</dbReference>
<dbReference type="PDB" id="1TWC">
    <property type="method" value="X-ray"/>
    <property type="resolution" value="3.00 A"/>
    <property type="chains" value="I=1-122"/>
</dbReference>
<dbReference type="PDB" id="1TWF">
    <property type="method" value="X-ray"/>
    <property type="resolution" value="2.30 A"/>
    <property type="chains" value="I=1-122"/>
</dbReference>
<dbReference type="PDB" id="1TWG">
    <property type="method" value="X-ray"/>
    <property type="resolution" value="3.30 A"/>
    <property type="chains" value="I=1-122"/>
</dbReference>
<dbReference type="PDB" id="1TWH">
    <property type="method" value="X-ray"/>
    <property type="resolution" value="3.40 A"/>
    <property type="chains" value="I=1-122"/>
</dbReference>
<dbReference type="PDB" id="1WCM">
    <property type="method" value="X-ray"/>
    <property type="resolution" value="3.80 A"/>
    <property type="chains" value="I=1-122"/>
</dbReference>
<dbReference type="PDB" id="1Y1V">
    <property type="method" value="X-ray"/>
    <property type="resolution" value="3.80 A"/>
    <property type="chains" value="I=1-122"/>
</dbReference>
<dbReference type="PDB" id="1Y1W">
    <property type="method" value="X-ray"/>
    <property type="resolution" value="4.00 A"/>
    <property type="chains" value="I=1-122"/>
</dbReference>
<dbReference type="PDB" id="1Y1Y">
    <property type="method" value="X-ray"/>
    <property type="resolution" value="4.00 A"/>
    <property type="chains" value="I=1-122"/>
</dbReference>
<dbReference type="PDB" id="1Y77">
    <property type="method" value="X-ray"/>
    <property type="resolution" value="4.50 A"/>
    <property type="chains" value="I=1-122"/>
</dbReference>
<dbReference type="PDB" id="2B63">
    <property type="method" value="X-ray"/>
    <property type="resolution" value="3.80 A"/>
    <property type="chains" value="I=1-122"/>
</dbReference>
<dbReference type="PDB" id="2B8K">
    <property type="method" value="X-ray"/>
    <property type="resolution" value="4.15 A"/>
    <property type="chains" value="I=1-122"/>
</dbReference>
<dbReference type="PDB" id="2E2H">
    <property type="method" value="X-ray"/>
    <property type="resolution" value="3.95 A"/>
    <property type="chains" value="I=1-122"/>
</dbReference>
<dbReference type="PDB" id="2E2I">
    <property type="method" value="X-ray"/>
    <property type="resolution" value="3.41 A"/>
    <property type="chains" value="I=1-122"/>
</dbReference>
<dbReference type="PDB" id="2E2J">
    <property type="method" value="X-ray"/>
    <property type="resolution" value="3.50 A"/>
    <property type="chains" value="I=1-122"/>
</dbReference>
<dbReference type="PDB" id="2JA5">
    <property type="method" value="X-ray"/>
    <property type="resolution" value="3.80 A"/>
    <property type="chains" value="I=1-122"/>
</dbReference>
<dbReference type="PDB" id="2JA6">
    <property type="method" value="X-ray"/>
    <property type="resolution" value="4.00 A"/>
    <property type="chains" value="I=1-122"/>
</dbReference>
<dbReference type="PDB" id="2JA7">
    <property type="method" value="X-ray"/>
    <property type="resolution" value="3.80 A"/>
    <property type="chains" value="I/U=1-122"/>
</dbReference>
<dbReference type="PDB" id="2JA8">
    <property type="method" value="X-ray"/>
    <property type="resolution" value="3.80 A"/>
    <property type="chains" value="I=1-122"/>
</dbReference>
<dbReference type="PDB" id="2NVQ">
    <property type="method" value="X-ray"/>
    <property type="resolution" value="2.90 A"/>
    <property type="chains" value="I=1-122"/>
</dbReference>
<dbReference type="PDB" id="2NVT">
    <property type="method" value="X-ray"/>
    <property type="resolution" value="3.36 A"/>
    <property type="chains" value="I=1-122"/>
</dbReference>
<dbReference type="PDB" id="2NVX">
    <property type="method" value="X-ray"/>
    <property type="resolution" value="3.60 A"/>
    <property type="chains" value="I=1-122"/>
</dbReference>
<dbReference type="PDB" id="2NVY">
    <property type="method" value="X-ray"/>
    <property type="resolution" value="3.40 A"/>
    <property type="chains" value="I=1-122"/>
</dbReference>
<dbReference type="PDB" id="2NVZ">
    <property type="method" value="X-ray"/>
    <property type="resolution" value="4.30 A"/>
    <property type="chains" value="I=1-122"/>
</dbReference>
<dbReference type="PDB" id="2R7Z">
    <property type="method" value="X-ray"/>
    <property type="resolution" value="3.80 A"/>
    <property type="chains" value="I=1-122"/>
</dbReference>
<dbReference type="PDB" id="2R92">
    <property type="method" value="X-ray"/>
    <property type="resolution" value="3.80 A"/>
    <property type="chains" value="I=1-122"/>
</dbReference>
<dbReference type="PDB" id="2R93">
    <property type="method" value="X-ray"/>
    <property type="resolution" value="4.00 A"/>
    <property type="chains" value="I=1-122"/>
</dbReference>
<dbReference type="PDB" id="2VUM">
    <property type="method" value="X-ray"/>
    <property type="resolution" value="3.40 A"/>
    <property type="chains" value="I=1-122"/>
</dbReference>
<dbReference type="PDB" id="2YU9">
    <property type="method" value="X-ray"/>
    <property type="resolution" value="3.40 A"/>
    <property type="chains" value="I=1-122"/>
</dbReference>
<dbReference type="PDB" id="3CQZ">
    <property type="method" value="X-ray"/>
    <property type="resolution" value="2.80 A"/>
    <property type="chains" value="I=1-122"/>
</dbReference>
<dbReference type="PDB" id="3FKI">
    <property type="method" value="X-ray"/>
    <property type="resolution" value="3.88 A"/>
    <property type="chains" value="I=1-122"/>
</dbReference>
<dbReference type="PDB" id="3GTG">
    <property type="method" value="X-ray"/>
    <property type="resolution" value="3.78 A"/>
    <property type="chains" value="I=1-122"/>
</dbReference>
<dbReference type="PDB" id="3GTJ">
    <property type="method" value="X-ray"/>
    <property type="resolution" value="3.42 A"/>
    <property type="chains" value="I=1-122"/>
</dbReference>
<dbReference type="PDB" id="3GTK">
    <property type="method" value="X-ray"/>
    <property type="resolution" value="3.80 A"/>
    <property type="chains" value="I=1-122"/>
</dbReference>
<dbReference type="PDB" id="3GTL">
    <property type="method" value="X-ray"/>
    <property type="resolution" value="3.38 A"/>
    <property type="chains" value="I=1-122"/>
</dbReference>
<dbReference type="PDB" id="3GTM">
    <property type="method" value="X-ray"/>
    <property type="resolution" value="3.80 A"/>
    <property type="chains" value="I=1-122"/>
</dbReference>
<dbReference type="PDB" id="3GTO">
    <property type="method" value="X-ray"/>
    <property type="resolution" value="4.00 A"/>
    <property type="chains" value="I=1-122"/>
</dbReference>
<dbReference type="PDB" id="3GTP">
    <property type="method" value="X-ray"/>
    <property type="resolution" value="3.90 A"/>
    <property type="chains" value="I=1-122"/>
</dbReference>
<dbReference type="PDB" id="3GTQ">
    <property type="method" value="X-ray"/>
    <property type="resolution" value="3.80 A"/>
    <property type="chains" value="I=1-122"/>
</dbReference>
<dbReference type="PDB" id="3H3V">
    <property type="method" value="X-ray"/>
    <property type="resolution" value="4.00 A"/>
    <property type="chains" value="J=1-122"/>
</dbReference>
<dbReference type="PDB" id="3HOU">
    <property type="method" value="X-ray"/>
    <property type="resolution" value="3.20 A"/>
    <property type="chains" value="I/U=1-122"/>
</dbReference>
<dbReference type="PDB" id="3HOV">
    <property type="method" value="X-ray"/>
    <property type="resolution" value="3.50 A"/>
    <property type="chains" value="I=1-122"/>
</dbReference>
<dbReference type="PDB" id="3HOW">
    <property type="method" value="X-ray"/>
    <property type="resolution" value="3.60 A"/>
    <property type="chains" value="I=1-122"/>
</dbReference>
<dbReference type="PDB" id="3HOX">
    <property type="method" value="X-ray"/>
    <property type="resolution" value="3.65 A"/>
    <property type="chains" value="I=1-122"/>
</dbReference>
<dbReference type="PDB" id="3HOY">
    <property type="method" value="X-ray"/>
    <property type="resolution" value="3.40 A"/>
    <property type="chains" value="I=1-122"/>
</dbReference>
<dbReference type="PDB" id="3HOZ">
    <property type="method" value="X-ray"/>
    <property type="resolution" value="3.65 A"/>
    <property type="chains" value="I=1-122"/>
</dbReference>
<dbReference type="PDB" id="3I4M">
    <property type="method" value="X-ray"/>
    <property type="resolution" value="3.70 A"/>
    <property type="chains" value="I=1-122"/>
</dbReference>
<dbReference type="PDB" id="3I4N">
    <property type="method" value="X-ray"/>
    <property type="resolution" value="3.90 A"/>
    <property type="chains" value="I=1-122"/>
</dbReference>
<dbReference type="PDB" id="3J0K">
    <property type="method" value="EM"/>
    <property type="resolution" value="36.00 A"/>
    <property type="chains" value="I=1-122"/>
</dbReference>
<dbReference type="PDB" id="3J1N">
    <property type="method" value="EM"/>
    <property type="resolution" value="16.00 A"/>
    <property type="chains" value="I=1-122"/>
</dbReference>
<dbReference type="PDB" id="3K1F">
    <property type="method" value="X-ray"/>
    <property type="resolution" value="4.30 A"/>
    <property type="chains" value="I=1-122"/>
</dbReference>
<dbReference type="PDB" id="3K7A">
    <property type="method" value="X-ray"/>
    <property type="resolution" value="3.80 A"/>
    <property type="chains" value="I=1-122"/>
</dbReference>
<dbReference type="PDB" id="3M3Y">
    <property type="method" value="X-ray"/>
    <property type="resolution" value="3.18 A"/>
    <property type="chains" value="I=1-122"/>
</dbReference>
<dbReference type="PDB" id="3M4O">
    <property type="method" value="X-ray"/>
    <property type="resolution" value="3.57 A"/>
    <property type="chains" value="I=1-122"/>
</dbReference>
<dbReference type="PDB" id="3PO2">
    <property type="method" value="X-ray"/>
    <property type="resolution" value="3.30 A"/>
    <property type="chains" value="I=1-122"/>
</dbReference>
<dbReference type="PDB" id="3PO3">
    <property type="method" value="X-ray"/>
    <property type="resolution" value="3.30 A"/>
    <property type="chains" value="I=1-122"/>
</dbReference>
<dbReference type="PDB" id="3QT1">
    <property type="method" value="X-ray"/>
    <property type="resolution" value="4.30 A"/>
    <property type="chains" value="I=1-87"/>
</dbReference>
<dbReference type="PDB" id="3RZD">
    <property type="method" value="X-ray"/>
    <property type="resolution" value="3.30 A"/>
    <property type="chains" value="I=1-122"/>
</dbReference>
<dbReference type="PDB" id="3RZO">
    <property type="method" value="X-ray"/>
    <property type="resolution" value="3.00 A"/>
    <property type="chains" value="I=1-122"/>
</dbReference>
<dbReference type="PDB" id="3S14">
    <property type="method" value="X-ray"/>
    <property type="resolution" value="2.85 A"/>
    <property type="chains" value="I=1-122"/>
</dbReference>
<dbReference type="PDB" id="3S15">
    <property type="method" value="X-ray"/>
    <property type="resolution" value="3.30 A"/>
    <property type="chains" value="I=1-122"/>
</dbReference>
<dbReference type="PDB" id="3S16">
    <property type="method" value="X-ray"/>
    <property type="resolution" value="3.24 A"/>
    <property type="chains" value="I=1-122"/>
</dbReference>
<dbReference type="PDB" id="3S17">
    <property type="method" value="X-ray"/>
    <property type="resolution" value="3.20 A"/>
    <property type="chains" value="I=1-122"/>
</dbReference>
<dbReference type="PDB" id="3S1M">
    <property type="method" value="X-ray"/>
    <property type="resolution" value="3.13 A"/>
    <property type="chains" value="I=1-122"/>
</dbReference>
<dbReference type="PDB" id="3S1N">
    <property type="method" value="X-ray"/>
    <property type="resolution" value="3.10 A"/>
    <property type="chains" value="I=1-122"/>
</dbReference>
<dbReference type="PDB" id="3S1Q">
    <property type="method" value="X-ray"/>
    <property type="resolution" value="3.30 A"/>
    <property type="chains" value="I=1-122"/>
</dbReference>
<dbReference type="PDB" id="3S1R">
    <property type="method" value="X-ray"/>
    <property type="resolution" value="3.20 A"/>
    <property type="chains" value="I=1-122"/>
</dbReference>
<dbReference type="PDB" id="3S2D">
    <property type="method" value="X-ray"/>
    <property type="resolution" value="3.20 A"/>
    <property type="chains" value="I=1-122"/>
</dbReference>
<dbReference type="PDB" id="3S2H">
    <property type="method" value="X-ray"/>
    <property type="resolution" value="3.30 A"/>
    <property type="chains" value="I=1-122"/>
</dbReference>
<dbReference type="PDB" id="4A3B">
    <property type="method" value="X-ray"/>
    <property type="resolution" value="3.50 A"/>
    <property type="chains" value="I=1-122"/>
</dbReference>
<dbReference type="PDB" id="4A3C">
    <property type="method" value="X-ray"/>
    <property type="resolution" value="3.50 A"/>
    <property type="chains" value="I=1-122"/>
</dbReference>
<dbReference type="PDB" id="4A3D">
    <property type="method" value="X-ray"/>
    <property type="resolution" value="3.40 A"/>
    <property type="chains" value="I=1-122"/>
</dbReference>
<dbReference type="PDB" id="4A3E">
    <property type="method" value="X-ray"/>
    <property type="resolution" value="3.40 A"/>
    <property type="chains" value="I=1-122"/>
</dbReference>
<dbReference type="PDB" id="4A3F">
    <property type="method" value="X-ray"/>
    <property type="resolution" value="3.50 A"/>
    <property type="chains" value="I=1-122"/>
</dbReference>
<dbReference type="PDB" id="4A3G">
    <property type="method" value="X-ray"/>
    <property type="resolution" value="3.50 A"/>
    <property type="chains" value="I=1-122"/>
</dbReference>
<dbReference type="PDB" id="4A3I">
    <property type="method" value="X-ray"/>
    <property type="resolution" value="3.80 A"/>
    <property type="chains" value="I=1-122"/>
</dbReference>
<dbReference type="PDB" id="4A3J">
    <property type="method" value="X-ray"/>
    <property type="resolution" value="3.70 A"/>
    <property type="chains" value="I=1-122"/>
</dbReference>
<dbReference type="PDB" id="4A3K">
    <property type="method" value="X-ray"/>
    <property type="resolution" value="3.50 A"/>
    <property type="chains" value="I=1-122"/>
</dbReference>
<dbReference type="PDB" id="4A3L">
    <property type="method" value="X-ray"/>
    <property type="resolution" value="3.50 A"/>
    <property type="chains" value="I=1-122"/>
</dbReference>
<dbReference type="PDB" id="4A3M">
    <property type="method" value="X-ray"/>
    <property type="resolution" value="3.90 A"/>
    <property type="chains" value="I=1-122"/>
</dbReference>
<dbReference type="PDB" id="4A93">
    <property type="method" value="X-ray"/>
    <property type="resolution" value="3.40 A"/>
    <property type="chains" value="I=1-122"/>
</dbReference>
<dbReference type="PDB" id="4BBR">
    <property type="method" value="X-ray"/>
    <property type="resolution" value="3.40 A"/>
    <property type="chains" value="I=1-122"/>
</dbReference>
<dbReference type="PDB" id="4BBS">
    <property type="method" value="X-ray"/>
    <property type="resolution" value="3.60 A"/>
    <property type="chains" value="I=1-122"/>
</dbReference>
<dbReference type="PDB" id="4BXX">
    <property type="method" value="X-ray"/>
    <property type="resolution" value="3.28 A"/>
    <property type="chains" value="I=1-122"/>
</dbReference>
<dbReference type="PDB" id="4BXZ">
    <property type="method" value="X-ray"/>
    <property type="resolution" value="4.80 A"/>
    <property type="chains" value="I=1-122"/>
</dbReference>
<dbReference type="PDB" id="4BY1">
    <property type="method" value="X-ray"/>
    <property type="resolution" value="3.60 A"/>
    <property type="chains" value="I=1-122"/>
</dbReference>
<dbReference type="PDB" id="4BY7">
    <property type="method" value="X-ray"/>
    <property type="resolution" value="3.15 A"/>
    <property type="chains" value="I=1-122"/>
</dbReference>
<dbReference type="PDB" id="4V1M">
    <property type="method" value="EM"/>
    <property type="resolution" value="6.60 A"/>
    <property type="chains" value="I=1-122"/>
</dbReference>
<dbReference type="PDB" id="4V1N">
    <property type="method" value="EM"/>
    <property type="resolution" value="7.80 A"/>
    <property type="chains" value="I=1-122"/>
</dbReference>
<dbReference type="PDB" id="4V1O">
    <property type="method" value="EM"/>
    <property type="resolution" value="9.70 A"/>
    <property type="chains" value="I=1-122"/>
</dbReference>
<dbReference type="PDB" id="4X67">
    <property type="method" value="X-ray"/>
    <property type="resolution" value="4.10 A"/>
    <property type="chains" value="I=1-122"/>
</dbReference>
<dbReference type="PDB" id="4X6A">
    <property type="method" value="X-ray"/>
    <property type="resolution" value="3.96 A"/>
    <property type="chains" value="I=1-122"/>
</dbReference>
<dbReference type="PDB" id="4Y52">
    <property type="method" value="X-ray"/>
    <property type="resolution" value="3.50 A"/>
    <property type="chains" value="I=1-122"/>
</dbReference>
<dbReference type="PDB" id="4Y7N">
    <property type="method" value="X-ray"/>
    <property type="resolution" value="3.30 A"/>
    <property type="chains" value="I=1-122"/>
</dbReference>
<dbReference type="PDB" id="5C3E">
    <property type="method" value="X-ray"/>
    <property type="resolution" value="3.70 A"/>
    <property type="chains" value="I=1-122"/>
</dbReference>
<dbReference type="PDB" id="5C44">
    <property type="method" value="X-ray"/>
    <property type="resolution" value="3.95 A"/>
    <property type="chains" value="I=1-120"/>
</dbReference>
<dbReference type="PDB" id="5C4A">
    <property type="method" value="X-ray"/>
    <property type="resolution" value="4.20 A"/>
    <property type="chains" value="I=1-122"/>
</dbReference>
<dbReference type="PDB" id="5C4J">
    <property type="method" value="X-ray"/>
    <property type="resolution" value="4.00 A"/>
    <property type="chains" value="I=1-122"/>
</dbReference>
<dbReference type="PDB" id="5C4X">
    <property type="method" value="X-ray"/>
    <property type="resolution" value="4.00 A"/>
    <property type="chains" value="I=1-122"/>
</dbReference>
<dbReference type="PDB" id="5FMF">
    <property type="method" value="EM"/>
    <property type="resolution" value="6.00 A"/>
    <property type="chains" value="I=2-120"/>
</dbReference>
<dbReference type="PDB" id="5FYW">
    <property type="method" value="EM"/>
    <property type="resolution" value="4.35 A"/>
    <property type="chains" value="I=1-122"/>
</dbReference>
<dbReference type="PDB" id="5FZ5">
    <property type="method" value="EM"/>
    <property type="resolution" value="8.80 A"/>
    <property type="chains" value="I=1-122"/>
</dbReference>
<dbReference type="PDB" id="5IP7">
    <property type="method" value="X-ray"/>
    <property type="resolution" value="3.52 A"/>
    <property type="chains" value="I=2-120"/>
</dbReference>
<dbReference type="PDB" id="5IP9">
    <property type="method" value="X-ray"/>
    <property type="resolution" value="3.90 A"/>
    <property type="chains" value="I=2-120"/>
</dbReference>
<dbReference type="PDB" id="5OQJ">
    <property type="method" value="EM"/>
    <property type="resolution" value="4.70 A"/>
    <property type="chains" value="I=1-122"/>
</dbReference>
<dbReference type="PDB" id="5OQM">
    <property type="method" value="EM"/>
    <property type="resolution" value="5.80 A"/>
    <property type="chains" value="I=1-122"/>
</dbReference>
<dbReference type="PDB" id="5OT2">
    <property type="method" value="X-ray"/>
    <property type="resolution" value="3.20 A"/>
    <property type="chains" value="I=1-122"/>
</dbReference>
<dbReference type="PDB" id="5SVA">
    <property type="method" value="EM"/>
    <property type="resolution" value="15.30 A"/>
    <property type="chains" value="I=1-122"/>
</dbReference>
<dbReference type="PDB" id="5U5Q">
    <property type="method" value="X-ray"/>
    <property type="resolution" value="3.80 A"/>
    <property type="chains" value="I=1-122"/>
</dbReference>
<dbReference type="PDB" id="5VVR">
    <property type="method" value="EM"/>
    <property type="resolution" value="5.80 A"/>
    <property type="chains" value="I=1-122"/>
</dbReference>
<dbReference type="PDB" id="5VVS">
    <property type="method" value="EM"/>
    <property type="resolution" value="6.40 A"/>
    <property type="chains" value="I=1-122"/>
</dbReference>
<dbReference type="PDB" id="5W4U">
    <property type="method" value="X-ray"/>
    <property type="resolution" value="3.60 A"/>
    <property type="chains" value="I=1-122"/>
</dbReference>
<dbReference type="PDB" id="5W51">
    <property type="method" value="X-ray"/>
    <property type="resolution" value="3.40 A"/>
    <property type="chains" value="I=1-122"/>
</dbReference>
<dbReference type="PDB" id="6BLO">
    <property type="method" value="X-ray"/>
    <property type="resolution" value="3.40 A"/>
    <property type="chains" value="I=1-122"/>
</dbReference>
<dbReference type="PDB" id="6BLP">
    <property type="method" value="X-ray"/>
    <property type="resolution" value="3.20 A"/>
    <property type="chains" value="I=1-122"/>
</dbReference>
<dbReference type="PDB" id="6BM2">
    <property type="method" value="X-ray"/>
    <property type="resolution" value="3.40 A"/>
    <property type="chains" value="I=1-122"/>
</dbReference>
<dbReference type="PDB" id="6BM4">
    <property type="method" value="X-ray"/>
    <property type="resolution" value="2.95 A"/>
    <property type="chains" value="I=1-122"/>
</dbReference>
<dbReference type="PDB" id="6BQF">
    <property type="method" value="X-ray"/>
    <property type="resolution" value="3.35 A"/>
    <property type="chains" value="I=1-122"/>
</dbReference>
<dbReference type="PDB" id="6GYK">
    <property type="method" value="EM"/>
    <property type="resolution" value="5.10 A"/>
    <property type="chains" value="I=1-122"/>
</dbReference>
<dbReference type="PDB" id="6GYL">
    <property type="method" value="EM"/>
    <property type="resolution" value="4.80 A"/>
    <property type="chains" value="I=1-122"/>
</dbReference>
<dbReference type="PDB" id="6GYM">
    <property type="method" value="EM"/>
    <property type="resolution" value="6.70 A"/>
    <property type="chains" value="I=1-122"/>
</dbReference>
<dbReference type="PDB" id="6I84">
    <property type="method" value="EM"/>
    <property type="resolution" value="4.40 A"/>
    <property type="chains" value="I=1-122"/>
</dbReference>
<dbReference type="PDB" id="6O6C">
    <property type="method" value="EM"/>
    <property type="resolution" value="3.10 A"/>
    <property type="chains" value="G=1-122"/>
</dbReference>
<dbReference type="PDB" id="6UPX">
    <property type="method" value="X-ray"/>
    <property type="resolution" value="3.40 A"/>
    <property type="chains" value="I=1-122"/>
</dbReference>
<dbReference type="PDB" id="6UPY">
    <property type="method" value="X-ray"/>
    <property type="resolution" value="3.40 A"/>
    <property type="chains" value="I=1-122"/>
</dbReference>
<dbReference type="PDB" id="6UPZ">
    <property type="method" value="X-ray"/>
    <property type="resolution" value="3.10 A"/>
    <property type="chains" value="I=1-122"/>
</dbReference>
<dbReference type="PDB" id="6UQ0">
    <property type="method" value="X-ray"/>
    <property type="resolution" value="3.56 A"/>
    <property type="chains" value="I=1-122"/>
</dbReference>
<dbReference type="PDB" id="6UQ1">
    <property type="method" value="X-ray"/>
    <property type="resolution" value="3.60 A"/>
    <property type="chains" value="I=1-122"/>
</dbReference>
<dbReference type="PDB" id="6UQ2">
    <property type="method" value="X-ray"/>
    <property type="resolution" value="3.20 A"/>
    <property type="chains" value="I=1-122"/>
</dbReference>
<dbReference type="PDB" id="6UQ3">
    <property type="method" value="X-ray"/>
    <property type="resolution" value="3.47 A"/>
    <property type="chains" value="I=1-122"/>
</dbReference>
<dbReference type="PDB" id="7KED">
    <property type="method" value="X-ray"/>
    <property type="resolution" value="3.60 A"/>
    <property type="chains" value="I=1-122"/>
</dbReference>
<dbReference type="PDB" id="7KEE">
    <property type="method" value="X-ray"/>
    <property type="resolution" value="3.45 A"/>
    <property type="chains" value="I=1-122"/>
</dbReference>
<dbReference type="PDB" id="7KEF">
    <property type="method" value="X-ray"/>
    <property type="resolution" value="3.89 A"/>
    <property type="chains" value="I=1-122"/>
</dbReference>
<dbReference type="PDB" id="7MEI">
    <property type="method" value="EM"/>
    <property type="resolution" value="3.54 A"/>
    <property type="chains" value="I/i=1-122"/>
</dbReference>
<dbReference type="PDB" id="7MK9">
    <property type="method" value="EM"/>
    <property type="resolution" value="3.54 A"/>
    <property type="chains" value="I=1-122"/>
</dbReference>
<dbReference type="PDB" id="7MKA">
    <property type="method" value="EM"/>
    <property type="resolution" value="3.54 A"/>
    <property type="chains" value="i=1-122"/>
</dbReference>
<dbReference type="PDB" id="7ML0">
    <property type="method" value="EM"/>
    <property type="resolution" value="3.00 A"/>
    <property type="chains" value="I=1-122"/>
</dbReference>
<dbReference type="PDB" id="7ML1">
    <property type="method" value="EM"/>
    <property type="resolution" value="4.00 A"/>
    <property type="chains" value="I=1-122"/>
</dbReference>
<dbReference type="PDB" id="7ML2">
    <property type="method" value="EM"/>
    <property type="resolution" value="3.40 A"/>
    <property type="chains" value="I=1-122"/>
</dbReference>
<dbReference type="PDB" id="7ML4">
    <property type="method" value="EM"/>
    <property type="resolution" value="3.10 A"/>
    <property type="chains" value="I=1-122"/>
</dbReference>
<dbReference type="PDB" id="7NKX">
    <property type="method" value="EM"/>
    <property type="resolution" value="2.90 A"/>
    <property type="chains" value="I=1-122"/>
</dbReference>
<dbReference type="PDB" id="7NKY">
    <property type="method" value="EM"/>
    <property type="resolution" value="3.20 A"/>
    <property type="chains" value="I=1-122"/>
</dbReference>
<dbReference type="PDB" id="7O4I">
    <property type="method" value="EM"/>
    <property type="resolution" value="3.20 A"/>
    <property type="chains" value="I=1-122"/>
</dbReference>
<dbReference type="PDB" id="7O4J">
    <property type="method" value="EM"/>
    <property type="resolution" value="2.90 A"/>
    <property type="chains" value="I=1-122"/>
</dbReference>
<dbReference type="PDB" id="7O72">
    <property type="method" value="EM"/>
    <property type="resolution" value="3.40 A"/>
    <property type="chains" value="I=1-122"/>
</dbReference>
<dbReference type="PDB" id="7O73">
    <property type="method" value="EM"/>
    <property type="resolution" value="3.40 A"/>
    <property type="chains" value="I=1-122"/>
</dbReference>
<dbReference type="PDB" id="7O75">
    <property type="method" value="EM"/>
    <property type="resolution" value="3.20 A"/>
    <property type="chains" value="I=1-122"/>
</dbReference>
<dbReference type="PDB" id="7RIM">
    <property type="method" value="X-ray"/>
    <property type="resolution" value="2.90 A"/>
    <property type="chains" value="I=1-122"/>
</dbReference>
<dbReference type="PDB" id="7RIP">
    <property type="method" value="X-ray"/>
    <property type="resolution" value="3.30 A"/>
    <property type="chains" value="I=1-122"/>
</dbReference>
<dbReference type="PDB" id="7RIQ">
    <property type="method" value="X-ray"/>
    <property type="resolution" value="3.00 A"/>
    <property type="chains" value="I=1-122"/>
</dbReference>
<dbReference type="PDB" id="7RIW">
    <property type="method" value="X-ray"/>
    <property type="resolution" value="3.20 A"/>
    <property type="chains" value="I=1-122"/>
</dbReference>
<dbReference type="PDB" id="7RIX">
    <property type="method" value="X-ray"/>
    <property type="resolution" value="3.40 A"/>
    <property type="chains" value="I=1-122"/>
</dbReference>
<dbReference type="PDB" id="7RIY">
    <property type="method" value="X-ray"/>
    <property type="resolution" value="3.70 A"/>
    <property type="chains" value="I=1-122"/>
</dbReference>
<dbReference type="PDB" id="7UI9">
    <property type="method" value="EM"/>
    <property type="resolution" value="3.30 A"/>
    <property type="chains" value="I=1-122"/>
</dbReference>
<dbReference type="PDB" id="7UIF">
    <property type="method" value="EM"/>
    <property type="resolution" value="4.60 A"/>
    <property type="chains" value="I=1-122"/>
</dbReference>
<dbReference type="PDB" id="7UIO">
    <property type="method" value="EM"/>
    <property type="resolution" value="3.30 A"/>
    <property type="chains" value="AI/BI=1-122"/>
</dbReference>
<dbReference type="PDB" id="7ZS9">
    <property type="method" value="EM"/>
    <property type="resolution" value="3.10 A"/>
    <property type="chains" value="I=1-122"/>
</dbReference>
<dbReference type="PDB" id="7ZSA">
    <property type="method" value="EM"/>
    <property type="resolution" value="4.00 A"/>
    <property type="chains" value="I=1-122"/>
</dbReference>
<dbReference type="PDB" id="7ZSB">
    <property type="method" value="EM"/>
    <property type="resolution" value="6.60 A"/>
    <property type="chains" value="I=1-122"/>
</dbReference>
<dbReference type="PDB" id="8CEN">
    <property type="method" value="EM"/>
    <property type="resolution" value="3.00 A"/>
    <property type="chains" value="I=1-122"/>
</dbReference>
<dbReference type="PDB" id="8CEO">
    <property type="method" value="EM"/>
    <property type="resolution" value="3.60 A"/>
    <property type="chains" value="I=1-122"/>
</dbReference>
<dbReference type="PDB" id="8JCH">
    <property type="method" value="EM"/>
    <property type="resolution" value="2.70 A"/>
    <property type="chains" value="I=1-122"/>
</dbReference>
<dbReference type="PDB" id="8K5P">
    <property type="method" value="EM"/>
    <property type="resolution" value="2.80 A"/>
    <property type="chains" value="I=1-122"/>
</dbReference>
<dbReference type="PDB" id="8RAM">
    <property type="method" value="EM"/>
    <property type="resolution" value="2.80 A"/>
    <property type="chains" value="I=1-122"/>
</dbReference>
<dbReference type="PDB" id="8RAP">
    <property type="method" value="EM"/>
    <property type="resolution" value="4.30 A"/>
    <property type="chains" value="I=1-122"/>
</dbReference>
<dbReference type="PDB" id="8TUG">
    <property type="method" value="EM"/>
    <property type="resolution" value="3.50 A"/>
    <property type="chains" value="I=1-122"/>
</dbReference>
<dbReference type="PDB" id="8TVP">
    <property type="method" value="EM"/>
    <property type="resolution" value="3.70 A"/>
    <property type="chains" value="I=1-122"/>
</dbReference>
<dbReference type="PDB" id="8TVQ">
    <property type="method" value="EM"/>
    <property type="resolution" value="4.60 A"/>
    <property type="chains" value="I=1-122"/>
</dbReference>
<dbReference type="PDB" id="8TVS">
    <property type="method" value="EM"/>
    <property type="resolution" value="4.40 A"/>
    <property type="chains" value="I=1-122"/>
</dbReference>
<dbReference type="PDB" id="8TVV">
    <property type="method" value="EM"/>
    <property type="resolution" value="3.70 A"/>
    <property type="chains" value="I=1-122"/>
</dbReference>
<dbReference type="PDB" id="8TVW">
    <property type="method" value="EM"/>
    <property type="resolution" value="3.60 A"/>
    <property type="chains" value="I=1-122"/>
</dbReference>
<dbReference type="PDB" id="8TVX">
    <property type="method" value="EM"/>
    <property type="resolution" value="3.70 A"/>
    <property type="chains" value="I=1-122"/>
</dbReference>
<dbReference type="PDB" id="8TVY">
    <property type="method" value="EM"/>
    <property type="resolution" value="3.10 A"/>
    <property type="chains" value="I=1-122"/>
</dbReference>
<dbReference type="PDB" id="8UKQ">
    <property type="method" value="X-ray"/>
    <property type="resolution" value="3.50 A"/>
    <property type="chains" value="I=1-122"/>
</dbReference>
<dbReference type="PDB" id="8UKR">
    <property type="method" value="X-ray"/>
    <property type="resolution" value="3.78 A"/>
    <property type="chains" value="I=1-122"/>
</dbReference>
<dbReference type="PDB" id="8UKS">
    <property type="method" value="X-ray"/>
    <property type="resolution" value="3.40 A"/>
    <property type="chains" value="I=1-122"/>
</dbReference>
<dbReference type="PDB" id="8UKT">
    <property type="method" value="X-ray"/>
    <property type="resolution" value="3.60 A"/>
    <property type="chains" value="I=1-122"/>
</dbReference>
<dbReference type="PDB" id="8UKU">
    <property type="method" value="X-ray"/>
    <property type="resolution" value="3.60 A"/>
    <property type="chains" value="I=1-122"/>
</dbReference>
<dbReference type="PDB" id="8UMH">
    <property type="method" value="EM"/>
    <property type="resolution" value="4.10 A"/>
    <property type="chains" value="I=1-122"/>
</dbReference>
<dbReference type="PDB" id="8UMI">
    <property type="method" value="EM"/>
    <property type="resolution" value="3.70 A"/>
    <property type="chains" value="I=1-122"/>
</dbReference>
<dbReference type="PDB" id="8UOQ">
    <property type="method" value="EM"/>
    <property type="resolution" value="3.80 A"/>
    <property type="chains" value="I=1-122"/>
</dbReference>
<dbReference type="PDB" id="8UOT">
    <property type="method" value="EM"/>
    <property type="resolution" value="3.70 A"/>
    <property type="chains" value="I=1-122"/>
</dbReference>
<dbReference type="PDB" id="9BVT">
    <property type="method" value="X-ray"/>
    <property type="resolution" value="3.40 A"/>
    <property type="chains" value="I=1-122"/>
</dbReference>
<dbReference type="PDB" id="9BW0">
    <property type="method" value="X-ray"/>
    <property type="resolution" value="3.51 A"/>
    <property type="chains" value="I=1-122"/>
</dbReference>
<dbReference type="PDBsum" id="1I3Q"/>
<dbReference type="PDBsum" id="1I50"/>
<dbReference type="PDBsum" id="1I6H"/>
<dbReference type="PDBsum" id="1K83"/>
<dbReference type="PDBsum" id="1NIK"/>
<dbReference type="PDBsum" id="1NT9"/>
<dbReference type="PDBsum" id="1PQV"/>
<dbReference type="PDBsum" id="1R5U"/>
<dbReference type="PDBsum" id="1R9S"/>
<dbReference type="PDBsum" id="1R9T"/>
<dbReference type="PDBsum" id="1SFO"/>
<dbReference type="PDBsum" id="1TWA"/>
<dbReference type="PDBsum" id="1TWC"/>
<dbReference type="PDBsum" id="1TWF"/>
<dbReference type="PDBsum" id="1TWG"/>
<dbReference type="PDBsum" id="1TWH"/>
<dbReference type="PDBsum" id="1WCM"/>
<dbReference type="PDBsum" id="1Y1V"/>
<dbReference type="PDBsum" id="1Y1W"/>
<dbReference type="PDBsum" id="1Y1Y"/>
<dbReference type="PDBsum" id="1Y77"/>
<dbReference type="PDBsum" id="2B63"/>
<dbReference type="PDBsum" id="2B8K"/>
<dbReference type="PDBsum" id="2E2H"/>
<dbReference type="PDBsum" id="2E2I"/>
<dbReference type="PDBsum" id="2E2J"/>
<dbReference type="PDBsum" id="2JA5"/>
<dbReference type="PDBsum" id="2JA6"/>
<dbReference type="PDBsum" id="2JA7"/>
<dbReference type="PDBsum" id="2JA8"/>
<dbReference type="PDBsum" id="2NVQ"/>
<dbReference type="PDBsum" id="2NVT"/>
<dbReference type="PDBsum" id="2NVX"/>
<dbReference type="PDBsum" id="2NVY"/>
<dbReference type="PDBsum" id="2NVZ"/>
<dbReference type="PDBsum" id="2R7Z"/>
<dbReference type="PDBsum" id="2R92"/>
<dbReference type="PDBsum" id="2R93"/>
<dbReference type="PDBsum" id="2VUM"/>
<dbReference type="PDBsum" id="2YU9"/>
<dbReference type="PDBsum" id="3CQZ"/>
<dbReference type="PDBsum" id="3FKI"/>
<dbReference type="PDBsum" id="3GTG"/>
<dbReference type="PDBsum" id="3GTJ"/>
<dbReference type="PDBsum" id="3GTK"/>
<dbReference type="PDBsum" id="3GTL"/>
<dbReference type="PDBsum" id="3GTM"/>
<dbReference type="PDBsum" id="3GTO"/>
<dbReference type="PDBsum" id="3GTP"/>
<dbReference type="PDBsum" id="3GTQ"/>
<dbReference type="PDBsum" id="3H3V"/>
<dbReference type="PDBsum" id="3HOU"/>
<dbReference type="PDBsum" id="3HOV"/>
<dbReference type="PDBsum" id="3HOW"/>
<dbReference type="PDBsum" id="3HOX"/>
<dbReference type="PDBsum" id="3HOY"/>
<dbReference type="PDBsum" id="3HOZ"/>
<dbReference type="PDBsum" id="3I4M"/>
<dbReference type="PDBsum" id="3I4N"/>
<dbReference type="PDBsum" id="3J0K"/>
<dbReference type="PDBsum" id="3J1N"/>
<dbReference type="PDBsum" id="3K1F"/>
<dbReference type="PDBsum" id="3K7A"/>
<dbReference type="PDBsum" id="3M3Y"/>
<dbReference type="PDBsum" id="3M4O"/>
<dbReference type="PDBsum" id="3PO2"/>
<dbReference type="PDBsum" id="3PO3"/>
<dbReference type="PDBsum" id="3QT1"/>
<dbReference type="PDBsum" id="3RZD"/>
<dbReference type="PDBsum" id="3RZO"/>
<dbReference type="PDBsum" id="3S14"/>
<dbReference type="PDBsum" id="3S15"/>
<dbReference type="PDBsum" id="3S16"/>
<dbReference type="PDBsum" id="3S17"/>
<dbReference type="PDBsum" id="3S1M"/>
<dbReference type="PDBsum" id="3S1N"/>
<dbReference type="PDBsum" id="3S1Q"/>
<dbReference type="PDBsum" id="3S1R"/>
<dbReference type="PDBsum" id="3S2D"/>
<dbReference type="PDBsum" id="3S2H"/>
<dbReference type="PDBsum" id="4A3B"/>
<dbReference type="PDBsum" id="4A3C"/>
<dbReference type="PDBsum" id="4A3D"/>
<dbReference type="PDBsum" id="4A3E"/>
<dbReference type="PDBsum" id="4A3F"/>
<dbReference type="PDBsum" id="4A3G"/>
<dbReference type="PDBsum" id="4A3I"/>
<dbReference type="PDBsum" id="4A3J"/>
<dbReference type="PDBsum" id="4A3K"/>
<dbReference type="PDBsum" id="4A3L"/>
<dbReference type="PDBsum" id="4A3M"/>
<dbReference type="PDBsum" id="4A93"/>
<dbReference type="PDBsum" id="4BBR"/>
<dbReference type="PDBsum" id="4BBS"/>
<dbReference type="PDBsum" id="4BXX"/>
<dbReference type="PDBsum" id="4BXZ"/>
<dbReference type="PDBsum" id="4BY1"/>
<dbReference type="PDBsum" id="4BY7"/>
<dbReference type="PDBsum" id="4V1M"/>
<dbReference type="PDBsum" id="4V1N"/>
<dbReference type="PDBsum" id="4V1O"/>
<dbReference type="PDBsum" id="4X67"/>
<dbReference type="PDBsum" id="4X6A"/>
<dbReference type="PDBsum" id="4Y52"/>
<dbReference type="PDBsum" id="4Y7N"/>
<dbReference type="PDBsum" id="5C3E"/>
<dbReference type="PDBsum" id="5C44"/>
<dbReference type="PDBsum" id="5C4A"/>
<dbReference type="PDBsum" id="5C4J"/>
<dbReference type="PDBsum" id="5C4X"/>
<dbReference type="PDBsum" id="5FMF"/>
<dbReference type="PDBsum" id="5FYW"/>
<dbReference type="PDBsum" id="5FZ5"/>
<dbReference type="PDBsum" id="5IP7"/>
<dbReference type="PDBsum" id="5IP9"/>
<dbReference type="PDBsum" id="5OQJ"/>
<dbReference type="PDBsum" id="5OQM"/>
<dbReference type="PDBsum" id="5OT2"/>
<dbReference type="PDBsum" id="5SVA"/>
<dbReference type="PDBsum" id="5U5Q"/>
<dbReference type="PDBsum" id="5VVR"/>
<dbReference type="PDBsum" id="5VVS"/>
<dbReference type="PDBsum" id="5W4U"/>
<dbReference type="PDBsum" id="5W51"/>
<dbReference type="PDBsum" id="6BLO"/>
<dbReference type="PDBsum" id="6BLP"/>
<dbReference type="PDBsum" id="6BM2"/>
<dbReference type="PDBsum" id="6BM4"/>
<dbReference type="PDBsum" id="6BQF"/>
<dbReference type="PDBsum" id="6GYK"/>
<dbReference type="PDBsum" id="6GYL"/>
<dbReference type="PDBsum" id="6GYM"/>
<dbReference type="PDBsum" id="6I84"/>
<dbReference type="PDBsum" id="6O6C"/>
<dbReference type="PDBsum" id="6UPX"/>
<dbReference type="PDBsum" id="6UPY"/>
<dbReference type="PDBsum" id="6UPZ"/>
<dbReference type="PDBsum" id="6UQ0"/>
<dbReference type="PDBsum" id="6UQ1"/>
<dbReference type="PDBsum" id="6UQ2"/>
<dbReference type="PDBsum" id="6UQ3"/>
<dbReference type="PDBsum" id="7KED"/>
<dbReference type="PDBsum" id="7KEE"/>
<dbReference type="PDBsum" id="7KEF"/>
<dbReference type="PDBsum" id="7MEI"/>
<dbReference type="PDBsum" id="7MK9"/>
<dbReference type="PDBsum" id="7MKA"/>
<dbReference type="PDBsum" id="7ML0"/>
<dbReference type="PDBsum" id="7ML1"/>
<dbReference type="PDBsum" id="7ML2"/>
<dbReference type="PDBsum" id="7ML4"/>
<dbReference type="PDBsum" id="7NKX"/>
<dbReference type="PDBsum" id="7NKY"/>
<dbReference type="PDBsum" id="7O4I"/>
<dbReference type="PDBsum" id="7O4J"/>
<dbReference type="PDBsum" id="7O72"/>
<dbReference type="PDBsum" id="7O73"/>
<dbReference type="PDBsum" id="7O75"/>
<dbReference type="PDBsum" id="7RIM"/>
<dbReference type="PDBsum" id="7RIP"/>
<dbReference type="PDBsum" id="7RIQ"/>
<dbReference type="PDBsum" id="7RIW"/>
<dbReference type="PDBsum" id="7RIX"/>
<dbReference type="PDBsum" id="7RIY"/>
<dbReference type="PDBsum" id="7UI9"/>
<dbReference type="PDBsum" id="7UIF"/>
<dbReference type="PDBsum" id="7UIO"/>
<dbReference type="PDBsum" id="7ZS9"/>
<dbReference type="PDBsum" id="7ZSA"/>
<dbReference type="PDBsum" id="7ZSB"/>
<dbReference type="PDBsum" id="8CEN"/>
<dbReference type="PDBsum" id="8CEO"/>
<dbReference type="PDBsum" id="8JCH"/>
<dbReference type="PDBsum" id="8K5P"/>
<dbReference type="PDBsum" id="8RAM"/>
<dbReference type="PDBsum" id="8RAP"/>
<dbReference type="PDBsum" id="8TUG"/>
<dbReference type="PDBsum" id="8TVP"/>
<dbReference type="PDBsum" id="8TVQ"/>
<dbReference type="PDBsum" id="8TVS"/>
<dbReference type="PDBsum" id="8TVV"/>
<dbReference type="PDBsum" id="8TVW"/>
<dbReference type="PDBsum" id="8TVX"/>
<dbReference type="PDBsum" id="8TVY"/>
<dbReference type="PDBsum" id="8UKQ"/>
<dbReference type="PDBsum" id="8UKR"/>
<dbReference type="PDBsum" id="8UKS"/>
<dbReference type="PDBsum" id="8UKT"/>
<dbReference type="PDBsum" id="8UKU"/>
<dbReference type="PDBsum" id="8UMH"/>
<dbReference type="PDBsum" id="8UMI"/>
<dbReference type="PDBsum" id="8UOQ"/>
<dbReference type="PDBsum" id="8UOT"/>
<dbReference type="PDBsum" id="9BVT"/>
<dbReference type="PDBsum" id="9BW0"/>
<dbReference type="EMDB" id="EMD-0090"/>
<dbReference type="EMDB" id="EMD-0091"/>
<dbReference type="EMDB" id="EMD-0092"/>
<dbReference type="EMDB" id="EMD-0633"/>
<dbReference type="EMDB" id="EMD-12449"/>
<dbReference type="EMDB" id="EMD-12450"/>
<dbReference type="EMDB" id="EMD-12719"/>
<dbReference type="EMDB" id="EMD-12720"/>
<dbReference type="EMDB" id="EMD-12743"/>
<dbReference type="EMDB" id="EMD-12744"/>
<dbReference type="EMDB" id="EMD-12745"/>
<dbReference type="EMDB" id="EMD-14927"/>
<dbReference type="EMDB" id="EMD-14928"/>
<dbReference type="EMDB" id="EMD-14929"/>
<dbReference type="EMDB" id="EMD-16610"/>
<dbReference type="EMDB" id="EMD-16611"/>
<dbReference type="EMDB" id="EMD-19019"/>
<dbReference type="EMDB" id="EMD-19022"/>
<dbReference type="EMDB" id="EMD-26542"/>
<dbReference type="EMDB" id="EMD-26544"/>
<dbReference type="EMDB" id="EMD-26551"/>
<dbReference type="EMDB" id="EMD-2784"/>
<dbReference type="EMDB" id="EMD-2785"/>
<dbReference type="EMDB" id="EMD-2786"/>
<dbReference type="EMDB" id="EMD-36162"/>
<dbReference type="EMDB" id="EMD-36908"/>
<dbReference type="EMDB" id="EMD-3846"/>
<dbReference type="EMDB" id="EMD-3850"/>
<dbReference type="EMDB" id="EMD-42437"/>
<dbReference type="EMDB" id="EMD-42438"/>
<dbReference type="EMDB" id="EMD-4429"/>
<dbReference type="EMDB" id="EMD-8305"/>
<dbReference type="EMDB" id="EMD-8735"/>
<dbReference type="EMDB" id="EMD-8737"/>
<dbReference type="SMR" id="P27999"/>
<dbReference type="BioGRID" id="33178">
    <property type="interactions" value="111"/>
</dbReference>
<dbReference type="ComplexPortal" id="CPX-2662">
    <property type="entry name" value="DNA-directed RNA polymerase II complex"/>
</dbReference>
<dbReference type="DIP" id="DIP-610N"/>
<dbReference type="FunCoup" id="P27999">
    <property type="interactions" value="474"/>
</dbReference>
<dbReference type="IntAct" id="P27999">
    <property type="interactions" value="38"/>
</dbReference>
<dbReference type="MINT" id="P27999"/>
<dbReference type="STRING" id="4932.YGL070C"/>
<dbReference type="iPTMnet" id="P27999"/>
<dbReference type="PaxDb" id="4932-YGL070C"/>
<dbReference type="PeptideAtlas" id="P27999"/>
<dbReference type="EnsemblFungi" id="YGL070C_mRNA">
    <property type="protein sequence ID" value="YGL070C"/>
    <property type="gene ID" value="YGL070C"/>
</dbReference>
<dbReference type="GeneID" id="852810"/>
<dbReference type="KEGG" id="sce:YGL070C"/>
<dbReference type="AGR" id="SGD:S000003038"/>
<dbReference type="SGD" id="S000003038">
    <property type="gene designation" value="RPB9"/>
</dbReference>
<dbReference type="VEuPathDB" id="FungiDB:YGL070C"/>
<dbReference type="eggNOG" id="KOG2691">
    <property type="taxonomic scope" value="Eukaryota"/>
</dbReference>
<dbReference type="GeneTree" id="ENSGT00550000075063"/>
<dbReference type="HOGENOM" id="CLU_093932_0_1_1"/>
<dbReference type="InParanoid" id="P27999"/>
<dbReference type="OMA" id="DTSMVLF"/>
<dbReference type="OrthoDB" id="282270at2759"/>
<dbReference type="BioCyc" id="YEAST:G3O-30573-MONOMER"/>
<dbReference type="Reactome" id="R-SCE-113418">
    <property type="pathway name" value="Formation of the Early Elongation Complex"/>
</dbReference>
<dbReference type="Reactome" id="R-SCE-674695">
    <property type="pathway name" value="RNA Polymerase II Pre-transcription Events"/>
</dbReference>
<dbReference type="Reactome" id="R-SCE-6781823">
    <property type="pathway name" value="Formation of TC-NER Pre-Incision Complex"/>
</dbReference>
<dbReference type="Reactome" id="R-SCE-6782135">
    <property type="pathway name" value="Dual incision in TC-NER"/>
</dbReference>
<dbReference type="Reactome" id="R-SCE-6782210">
    <property type="pathway name" value="Gap-filling DNA repair synthesis and ligation in TC-NER"/>
</dbReference>
<dbReference type="Reactome" id="R-SCE-6796648">
    <property type="pathway name" value="TP53 Regulates Transcription of DNA Repair Genes"/>
</dbReference>
<dbReference type="Reactome" id="R-SCE-6807505">
    <property type="pathway name" value="RNA polymerase II transcribes snRNA genes"/>
</dbReference>
<dbReference type="Reactome" id="R-SCE-72086">
    <property type="pathway name" value="mRNA Capping"/>
</dbReference>
<dbReference type="Reactome" id="R-SCE-72203">
    <property type="pathway name" value="Processing of Capped Intron-Containing Pre-mRNA"/>
</dbReference>
<dbReference type="Reactome" id="R-SCE-73776">
    <property type="pathway name" value="RNA Polymerase II Promoter Escape"/>
</dbReference>
<dbReference type="Reactome" id="R-SCE-73779">
    <property type="pathway name" value="RNA Polymerase II Transcription Pre-Initiation And Promoter Opening"/>
</dbReference>
<dbReference type="Reactome" id="R-SCE-75953">
    <property type="pathway name" value="RNA Polymerase II Transcription Initiation"/>
</dbReference>
<dbReference type="Reactome" id="R-SCE-76042">
    <property type="pathway name" value="RNA Polymerase II Transcription Initiation And Promoter Clearance"/>
</dbReference>
<dbReference type="Reactome" id="R-SCE-77075">
    <property type="pathway name" value="RNA Pol II CTD phosphorylation and interaction with CE"/>
</dbReference>
<dbReference type="Reactome" id="R-SCE-9018519">
    <property type="pathway name" value="Estrogen-dependent gene expression"/>
</dbReference>
<dbReference type="BioGRID-ORCS" id="852810">
    <property type="hits" value="0 hits in 10 CRISPR screens"/>
</dbReference>
<dbReference type="EvolutionaryTrace" id="P27999"/>
<dbReference type="PRO" id="PR:P27999"/>
<dbReference type="Proteomes" id="UP000002311">
    <property type="component" value="Chromosome VII"/>
</dbReference>
<dbReference type="RNAct" id="P27999">
    <property type="molecule type" value="protein"/>
</dbReference>
<dbReference type="GO" id="GO:0005730">
    <property type="term" value="C:nucleolus"/>
    <property type="evidence" value="ECO:0007669"/>
    <property type="project" value="UniProtKB-SubCell"/>
</dbReference>
<dbReference type="GO" id="GO:0005634">
    <property type="term" value="C:nucleus"/>
    <property type="evidence" value="ECO:0000303"/>
    <property type="project" value="ComplexPortal"/>
</dbReference>
<dbReference type="GO" id="GO:0005665">
    <property type="term" value="C:RNA polymerase II, core complex"/>
    <property type="evidence" value="ECO:0000314"/>
    <property type="project" value="SGD"/>
</dbReference>
<dbReference type="GO" id="GO:0003899">
    <property type="term" value="F:DNA-directed RNA polymerase activity"/>
    <property type="evidence" value="ECO:0007669"/>
    <property type="project" value="InterPro"/>
</dbReference>
<dbReference type="GO" id="GO:0003676">
    <property type="term" value="F:nucleic acid binding"/>
    <property type="evidence" value="ECO:0007669"/>
    <property type="project" value="InterPro"/>
</dbReference>
<dbReference type="GO" id="GO:0008270">
    <property type="term" value="F:zinc ion binding"/>
    <property type="evidence" value="ECO:0007669"/>
    <property type="project" value="UniProtKB-KW"/>
</dbReference>
<dbReference type="GO" id="GO:0001193">
    <property type="term" value="P:maintenance of transcriptional fidelity during transcription elongation by RNA polymerase II"/>
    <property type="evidence" value="ECO:0000315"/>
    <property type="project" value="SGD"/>
</dbReference>
<dbReference type="GO" id="GO:0001172">
    <property type="term" value="P:RNA-templated transcription"/>
    <property type="evidence" value="ECO:0007669"/>
    <property type="project" value="GOC"/>
</dbReference>
<dbReference type="GO" id="GO:0006366">
    <property type="term" value="P:transcription by RNA polymerase II"/>
    <property type="evidence" value="ECO:0000315"/>
    <property type="project" value="SGD"/>
</dbReference>
<dbReference type="GO" id="GO:0006368">
    <property type="term" value="P:transcription elongation by RNA polymerase II"/>
    <property type="evidence" value="ECO:0000314"/>
    <property type="project" value="ComplexPortal"/>
</dbReference>
<dbReference type="GO" id="GO:0006367">
    <property type="term" value="P:transcription initiation at RNA polymerase II promoter"/>
    <property type="evidence" value="ECO:0000314"/>
    <property type="project" value="ComplexPortal"/>
</dbReference>
<dbReference type="GO" id="GO:0006283">
    <property type="term" value="P:transcription-coupled nucleotide-excision repair"/>
    <property type="evidence" value="ECO:0000316"/>
    <property type="project" value="SGD"/>
</dbReference>
<dbReference type="CDD" id="cd10508">
    <property type="entry name" value="Zn-ribbon_RPB9"/>
    <property type="match status" value="1"/>
</dbReference>
<dbReference type="FunFam" id="2.20.25.10:FF:000008">
    <property type="entry name" value="DNA-directed RNA polymerase II subunit RPB9"/>
    <property type="match status" value="1"/>
</dbReference>
<dbReference type="FunFam" id="2.20.25.10:FF:000016">
    <property type="entry name" value="DNA-directed RNA polymerase II subunit RPB9"/>
    <property type="match status" value="1"/>
</dbReference>
<dbReference type="Gene3D" id="2.20.25.10">
    <property type="match status" value="2"/>
</dbReference>
<dbReference type="InterPro" id="IPR019761">
    <property type="entry name" value="DNA-dir_RNA_pol-M_15_CS"/>
</dbReference>
<dbReference type="InterPro" id="IPR012164">
    <property type="entry name" value="Rpa12/Rpb9/Rpc10/TFS"/>
</dbReference>
<dbReference type="InterPro" id="IPR001529">
    <property type="entry name" value="Zn_ribbon_RPB9"/>
</dbReference>
<dbReference type="InterPro" id="IPR034012">
    <property type="entry name" value="Zn_ribbon_RPB9_C"/>
</dbReference>
<dbReference type="InterPro" id="IPR001222">
    <property type="entry name" value="Znf_TFIIS"/>
</dbReference>
<dbReference type="PANTHER" id="PTHR11239">
    <property type="entry name" value="DNA-DIRECTED RNA POLYMERASE"/>
    <property type="match status" value="1"/>
</dbReference>
<dbReference type="PANTHER" id="PTHR11239:SF1">
    <property type="entry name" value="DNA-DIRECTED RNA POLYMERASE II SUBUNIT RPB9"/>
    <property type="match status" value="1"/>
</dbReference>
<dbReference type="Pfam" id="PF02150">
    <property type="entry name" value="Zn_ribbon_RPB9"/>
    <property type="match status" value="1"/>
</dbReference>
<dbReference type="Pfam" id="PF01096">
    <property type="entry name" value="Zn_ribbon_TFIIS"/>
    <property type="match status" value="1"/>
</dbReference>
<dbReference type="PIRSF" id="PIRSF005586">
    <property type="entry name" value="RNApol_RpoM"/>
    <property type="match status" value="1"/>
</dbReference>
<dbReference type="SMART" id="SM00661">
    <property type="entry name" value="RPOL9"/>
    <property type="match status" value="1"/>
</dbReference>
<dbReference type="SMART" id="SM00440">
    <property type="entry name" value="ZnF_C2C2"/>
    <property type="match status" value="1"/>
</dbReference>
<dbReference type="SUPFAM" id="SSF57783">
    <property type="entry name" value="Zinc beta-ribbon"/>
    <property type="match status" value="2"/>
</dbReference>
<dbReference type="PROSITE" id="PS01030">
    <property type="entry name" value="RNA_POL_M_15KD"/>
    <property type="match status" value="1"/>
</dbReference>
<dbReference type="PROSITE" id="PS00466">
    <property type="entry name" value="ZF_TFIIS_1"/>
    <property type="match status" value="1"/>
</dbReference>
<dbReference type="PROSITE" id="PS51133">
    <property type="entry name" value="ZF_TFIIS_2"/>
    <property type="match status" value="1"/>
</dbReference>
<feature type="chain" id="PRO_0000121474" description="DNA-directed RNA polymerase II subunit RPB9">
    <location>
        <begin position="1"/>
        <end position="122"/>
    </location>
</feature>
<feature type="zinc finger region" description="C4-type" evidence="2">
    <location>
        <begin position="7"/>
        <end position="32"/>
    </location>
</feature>
<feature type="zinc finger region" description="TFIIS-type" evidence="3">
    <location>
        <begin position="71"/>
        <end position="111"/>
    </location>
</feature>
<feature type="binding site" evidence="4 5 7 14 20">
    <location>
        <position position="7"/>
    </location>
    <ligand>
        <name>Zn(2+)</name>
        <dbReference type="ChEBI" id="CHEBI:29105"/>
        <label>1</label>
    </ligand>
</feature>
<feature type="binding site" evidence="4 5 7 14 20">
    <location>
        <position position="10"/>
    </location>
    <ligand>
        <name>Zn(2+)</name>
        <dbReference type="ChEBI" id="CHEBI:29105"/>
        <label>1</label>
    </ligand>
</feature>
<feature type="binding site" evidence="4 5 7 14 20">
    <location>
        <position position="29"/>
    </location>
    <ligand>
        <name>Zn(2+)</name>
        <dbReference type="ChEBI" id="CHEBI:29105"/>
        <label>1</label>
    </ligand>
</feature>
<feature type="binding site" evidence="4 5 7 14 20">
    <location>
        <position position="32"/>
    </location>
    <ligand>
        <name>Zn(2+)</name>
        <dbReference type="ChEBI" id="CHEBI:29105"/>
        <label>1</label>
    </ligand>
</feature>
<feature type="binding site" evidence="3 5 7 14 20">
    <location>
        <position position="75"/>
    </location>
    <ligand>
        <name>Zn(2+)</name>
        <dbReference type="ChEBI" id="CHEBI:29105"/>
        <label>2</label>
    </ligand>
</feature>
<feature type="binding site" evidence="3 5 7 14 20">
    <location>
        <position position="78"/>
    </location>
    <ligand>
        <name>Zn(2+)</name>
        <dbReference type="ChEBI" id="CHEBI:29105"/>
        <label>2</label>
    </ligand>
</feature>
<feature type="binding site" evidence="3 5 7 14 20">
    <location>
        <position position="103"/>
    </location>
    <ligand>
        <name>Zn(2+)</name>
        <dbReference type="ChEBI" id="CHEBI:29105"/>
        <label>2</label>
    </ligand>
</feature>
<feature type="binding site" evidence="3 5 7 14 20">
    <location>
        <position position="106"/>
    </location>
    <ligand>
        <name>Zn(2+)</name>
        <dbReference type="ChEBI" id="CHEBI:29105"/>
        <label>2</label>
    </ligand>
</feature>
<feature type="modified residue" description="Phosphoserine" evidence="21">
    <location>
        <position position="40"/>
    </location>
</feature>
<feature type="strand" evidence="23">
    <location>
        <begin position="8"/>
        <end position="10"/>
    </location>
</feature>
<feature type="strand" evidence="23">
    <location>
        <begin position="15"/>
        <end position="19"/>
    </location>
</feature>
<feature type="turn" evidence="23">
    <location>
        <begin position="20"/>
        <end position="23"/>
    </location>
</feature>
<feature type="strand" evidence="23">
    <location>
        <begin position="24"/>
        <end position="28"/>
    </location>
</feature>
<feature type="strand" evidence="23">
    <location>
        <begin position="30"/>
        <end position="33"/>
    </location>
</feature>
<feature type="strand" evidence="23">
    <location>
        <begin position="35"/>
        <end position="37"/>
    </location>
</feature>
<feature type="strand" evidence="23">
    <location>
        <begin position="41"/>
        <end position="49"/>
    </location>
</feature>
<feature type="turn" evidence="22">
    <location>
        <begin position="52"/>
        <end position="57"/>
    </location>
</feature>
<feature type="helix" evidence="23">
    <location>
        <begin position="62"/>
        <end position="64"/>
    </location>
</feature>
<feature type="strand" evidence="25">
    <location>
        <begin position="66"/>
        <end position="68"/>
    </location>
</feature>
<feature type="strand" evidence="26">
    <location>
        <begin position="70"/>
        <end position="72"/>
    </location>
</feature>
<feature type="turn" evidence="23">
    <location>
        <begin position="76"/>
        <end position="78"/>
    </location>
</feature>
<feature type="strand" evidence="23">
    <location>
        <begin position="83"/>
        <end position="87"/>
    </location>
</feature>
<feature type="strand" evidence="27">
    <location>
        <begin position="92"/>
        <end position="95"/>
    </location>
</feature>
<feature type="strand" evidence="23">
    <location>
        <begin position="99"/>
        <end position="103"/>
    </location>
</feature>
<feature type="turn" evidence="23">
    <location>
        <begin position="104"/>
        <end position="106"/>
    </location>
</feature>
<feature type="strand" evidence="23">
    <location>
        <begin position="109"/>
        <end position="111"/>
    </location>
</feature>
<feature type="strand" evidence="24">
    <location>
        <begin position="114"/>
        <end position="116"/>
    </location>
</feature>
<feature type="helix" evidence="28">
    <location>
        <begin position="119"/>
        <end position="121"/>
    </location>
</feature>
<name>RPB9_YEAST</name>
<keyword id="KW-0002">3D-structure</keyword>
<keyword id="KW-0903">Direct protein sequencing</keyword>
<keyword id="KW-0227">DNA damage</keyword>
<keyword id="KW-0234">DNA repair</keyword>
<keyword id="KW-0240">DNA-directed RNA polymerase</keyword>
<keyword id="KW-0479">Metal-binding</keyword>
<keyword id="KW-0539">Nucleus</keyword>
<keyword id="KW-0597">Phosphoprotein</keyword>
<keyword id="KW-1185">Reference proteome</keyword>
<keyword id="KW-0804">Transcription</keyword>
<keyword id="KW-0862">Zinc</keyword>
<keyword id="KW-0863">Zinc-finger</keyword>
<sequence length="122" mass="14288">MTTFRFCRDCNNMLYPREDKENNRLLFECRTCSYVEEAGSPLVYRHELITNIGETAGVVQDIGSDPTLPRSDRECPKCHSRENVFFQSQQRRKDTSMVLFFVCLSCSHIFTSDQKNKRTQFS</sequence>